<dbReference type="EC" id="3.4.23.-"/>
<dbReference type="PIR" id="S01800">
    <property type="entry name" value="S01800"/>
</dbReference>
<dbReference type="GO" id="GO:0004190">
    <property type="term" value="F:aspartic-type endopeptidase activity"/>
    <property type="evidence" value="ECO:0007669"/>
    <property type="project" value="UniProtKB-KW"/>
</dbReference>
<dbReference type="GO" id="GO:0006508">
    <property type="term" value="P:proteolysis"/>
    <property type="evidence" value="ECO:0007669"/>
    <property type="project" value="UniProtKB-KW"/>
</dbReference>
<dbReference type="Gene3D" id="6.10.140.60">
    <property type="match status" value="1"/>
</dbReference>
<dbReference type="InterPro" id="IPR012848">
    <property type="entry name" value="Aspartic_peptidase_N"/>
</dbReference>
<dbReference type="Pfam" id="PF07966">
    <property type="entry name" value="A1_Propeptide"/>
    <property type="match status" value="1"/>
</dbReference>
<name>PEP3_THUOR</name>
<evidence type="ECO:0000305" key="1"/>
<protein>
    <recommendedName>
        <fullName>Pepsin-3</fullName>
        <ecNumber>3.4.23.-</ecNumber>
    </recommendedName>
</protein>
<proteinExistence type="evidence at protein level"/>
<accession>P20141</accession>
<feature type="propeptide" id="PRO_0000026005" description="Activation peptide">
    <location>
        <begin position="1"/>
        <end position="35"/>
    </location>
</feature>
<feature type="chain" id="PRO_0000026006" description="Pepsin-3">
    <location>
        <begin position="36"/>
        <end position="60" status="greater than"/>
    </location>
</feature>
<feature type="non-terminal residue">
    <location>
        <position position="60"/>
    </location>
</feature>
<reference key="1">
    <citation type="journal article" date="1988" name="Eur. J. Biochem.">
        <title>Tuna pepsinogens and pepsins. Purification, characterization and amino-terminal sequences.</title>
        <authorList>
            <person name="Tanji M."/>
            <person name="Kageyama T."/>
            <person name="Takahashi K."/>
        </authorList>
    </citation>
    <scope>PROTEIN SEQUENCE</scope>
</reference>
<keyword id="KW-0064">Aspartyl protease</keyword>
<keyword id="KW-0903">Direct protein sequencing</keyword>
<keyword id="KW-0378">Hydrolase</keyword>
<keyword id="KW-0645">Protease</keyword>
<keyword id="KW-0865">Zymogen</keyword>
<comment type="similarity">
    <text evidence="1">Belongs to the peptidase A1 family.</text>
</comment>
<organism>
    <name type="scientific">Thunnus orientalis</name>
    <name type="common">North Pacific bluefin tuna</name>
    <name type="synonym">Thunnus thynnus orientalis</name>
    <dbReference type="NCBI Taxonomy" id="8238"/>
    <lineage>
        <taxon>Eukaryota</taxon>
        <taxon>Metazoa</taxon>
        <taxon>Chordata</taxon>
        <taxon>Craniata</taxon>
        <taxon>Vertebrata</taxon>
        <taxon>Euteleostomi</taxon>
        <taxon>Actinopterygii</taxon>
        <taxon>Neopterygii</taxon>
        <taxon>Teleostei</taxon>
        <taxon>Neoteleostei</taxon>
        <taxon>Acanthomorphata</taxon>
        <taxon>Pelagiaria</taxon>
        <taxon>Scombriformes</taxon>
        <taxon>Scombridae</taxon>
        <taxon>Thunnus</taxon>
    </lineage>
</organism>
<sequence length="60" mass="6970">INVPLTRHKSMRESLREKGIELPYQDPAIKYRPEFATANYMYINQYADTIYYGAISIGTP</sequence>